<protein>
    <recommendedName>
        <fullName>RuvB-like 2</fullName>
        <ecNumber evidence="3">3.6.4.12</ecNumber>
    </recommendedName>
</protein>
<evidence type="ECO:0000250" key="1"/>
<evidence type="ECO:0000250" key="2">
    <source>
        <dbReference type="UniProtKB" id="Q9DE27"/>
    </source>
</evidence>
<evidence type="ECO:0000250" key="3">
    <source>
        <dbReference type="UniProtKB" id="Q9Y230"/>
    </source>
</evidence>
<evidence type="ECO:0000305" key="4"/>
<comment type="function">
    <text evidence="3">Possesses single-stranded DNA-stimulated ATPase and ATP-dependent DNA helicase (5' to 3') activity; hexamerization is thought to be critical for ATP hydrolysis and adjacent subunits in the ring-like structure contribute to the ATPase activity (By similarity). Component of the NuA4 histone acetyltransferase complex which is involved in transcriptional activation of select genes principally by acetylation of nucleosomal histones H4 and H2A (By similarity). This modification may both alter nucleosome-DNA interactions and promote interaction of the modified histones with other proteins which positively regulate transcription (By similarity). This complex may be required for the activation of transcriptional programs associated with oncogene and proto-oncogene mediated growth induction, tumor suppressor mediated growth arrest and replicative senescence, apoptosis, and DNA repair (By similarity). The NuA4 complex ATPase and helicase activities seem to be, at least in part, contributed by the association of RUVBL1 and RUVBL2 with EP400 (By similarity). NuA4 may also play a direct role in DNA repair when recruited to sites of DNA damage (By similarity). Component of a SWR1-like complex that specifically mediates the removal of histone H2A.Z/H2AZ1 from the nucleosome (By similarity). Proposed core component of the chromatin remodeling INO80 complex which exhibits DNA- and nucleosome-activated ATPase activity and catalyzes ATP-dependent nucleosome sliding (By similarity). Plays an essential role in oncogenic transformation by MYC and also modulates transcriptional activation by the LEF1/TCF1-CTNNB1 complex (By similarity). May also inhibit the transcriptional activity of ATF2 (By similarity). Involved in the endoplasmic reticulum (ER)-associated degradation (ERAD) pathway where it negatively regulates expression of ER stress response genes (By similarity). May play a role in regulating the composition of the U5 snRNP complex (By similarity).</text>
</comment>
<comment type="catalytic activity">
    <reaction evidence="3">
        <text>ATP + H2O = ADP + phosphate + H(+)</text>
        <dbReference type="Rhea" id="RHEA:13065"/>
        <dbReference type="ChEBI" id="CHEBI:15377"/>
        <dbReference type="ChEBI" id="CHEBI:15378"/>
        <dbReference type="ChEBI" id="CHEBI:30616"/>
        <dbReference type="ChEBI" id="CHEBI:43474"/>
        <dbReference type="ChEBI" id="CHEBI:456216"/>
        <dbReference type="EC" id="3.6.4.12"/>
    </reaction>
    <physiologicalReaction direction="left-to-right" evidence="3">
        <dbReference type="Rhea" id="RHEA:13066"/>
    </physiologicalReaction>
</comment>
<comment type="subunit">
    <text evidence="3 4">Forms homohexameric rings (Probable). Can form a dodecamer with RUVBL1 made of two stacked hexameric rings; however, even though RUVBL1 and RUVBL2 are present in equimolar ratio, the oligomeric status of each hexamer is not known. Oligomerization may regulate binding to nucleic acids and conversely, binding to nucleic acids may affect the dodecameric assembly. Interaction of the complex with DHX34 results in conformational changes of the N-terminus of the RUVBL2 subunits, resulting in loss of nucleotide binding ability and ATP hydrolysis of the complex (By similarity). Interacts with the transcriptional activation domain of MYC. Interacts with ATF2. Component of the RNA polymerase II holoenzyme complex. May also act to bridge the LEF1/TCF1-CTNNB1 complex and TBP. Component of the NuA4 histone acetyltransferase complex which contains the catalytic subunit KAT5/TIP60 and the subunits EP400, TRRAP/PAF400, BRD8/SMAP, EPC1, DMAP1/DNMAP1, RUVBL1/TIP49, RUVBL2, ING3, actin, ACTL6A/BAF53A, MORF4L1/MRG15, MORF4L2/MRGX, MRGBP, YEATS4/GAS41, VPS72/YL1 and MEAF6. The NuA4 complex interacts with MYC and the adenovirus E1A protein. RUVBL2 interacts with EP400. Component of a NuA4-related complex which contains EP400, TRRAP/PAF400, SRCAP, BRD8/SMAP, EPC1, DMAP1/DNMAP1, RUVBL1/TIP49, RUVBL2, actin, ACTL6A/BAF53A, VPS72 and YEATS4/GAS41. Interacts with NPAT. Component of the chromatin-remodeling INO80 complex; specifically part of a complex module associated with the helicase ATP-binding and the helicase C-terminal domain of INO80. Component of some MLL1/MLL complex, at least composed of the core components KMT2A/MLL1, ASH2L, HCFC1/HCF1, WDR5 and RBBP5, as well as the facultative components BACC1, CHD8, E2F6, HSP70, INO80C, KANSL1, LAS1L, MAX, MCRS1, MGA, MYST1/MOF, PELP1, PHF20, PRP31, RING2, RUVB1/TIP49A, RUVB2/TIP49B, SENP3, TAF1, TAF4, TAF6, TAF7, TAF9 and TEX10. Interacts with IGHMBP2. Interacts with TELO2. Interacts with HINT1. Component of a SWR1-like complex. Component of the R2TP complex composed at least of RUVBL1, RUVBL2, RPAP3 and PIHD1. Component of the PAQosome complex which is responsible for the biogenesis of several protein complexes and which consists of R2TP complex members RUVBL1, RUVBL2, RPAP3 and PIH1D1, URI complex members PFDN2, PFDN6, PDRG1, UXT and URI1 as well as ASDURF, POLR2E and DNAAF10/WDR92. Interacts with ITFG1. Interacts with ZMYND10. Interacts with WAC; WAC positively regulates MTOR activity by promoting the assembly of the TTT complex composed of TELO2, TTI1 and TTI2 and the RUVBL complex composed of RUVBL1 and RUVBL2 into the TTT-RUVBL complex which leads to the dimerization of the mTORC1 complex and its subsequent activation. Forms a complex with APPL1 and APPL2 (By similarity). Interacts with ZNHIT2 (via HIT-type zinc finger) in the presence of ATP or ADP; shows a stronger interaction in the presence of ADP (By similarity). The RUVBL1/RUVBL2 complex interacts with ZNHIT1 (via HIT-type zinc finger), ZNHIT3 (via HIT-type zinc finger), ZNHIT6 (via HIT-type zinc finger) and DDX59/ZNHIT5 (via HIT-type zinc finger) in the presence of ADP (By similarity). Interacts with NOPCHAP1; the interaction is direct and disrupted upon ATP binding (By similarity). Interacts with SMG1 (By similarity).</text>
</comment>
<comment type="subcellular location">
    <subcellularLocation>
        <location evidence="3">Nucleus matrix</location>
    </subcellularLocation>
    <subcellularLocation>
        <location evidence="3">Nucleus</location>
        <location evidence="3">Nucleoplasm</location>
    </subcellularLocation>
    <subcellularLocation>
        <location evidence="3">Cytoplasm</location>
    </subcellularLocation>
    <subcellularLocation>
        <location evidence="3">Membrane</location>
    </subcellularLocation>
    <subcellularLocation>
        <location evidence="2">Dynein axonemal particle</location>
    </subcellularLocation>
    <text evidence="3">Mainly localized in the nucleus, associated with nuclear matrix or in the nuclear cytosol. Although it is also present in the cytoplasm and associated with the cell membranes.</text>
</comment>
<comment type="similarity">
    <text evidence="4">Belongs to the RuvB family.</text>
</comment>
<organism>
    <name type="scientific">Bos taurus</name>
    <name type="common">Bovine</name>
    <dbReference type="NCBI Taxonomy" id="9913"/>
    <lineage>
        <taxon>Eukaryota</taxon>
        <taxon>Metazoa</taxon>
        <taxon>Chordata</taxon>
        <taxon>Craniata</taxon>
        <taxon>Vertebrata</taxon>
        <taxon>Euteleostomi</taxon>
        <taxon>Mammalia</taxon>
        <taxon>Eutheria</taxon>
        <taxon>Laurasiatheria</taxon>
        <taxon>Artiodactyla</taxon>
        <taxon>Ruminantia</taxon>
        <taxon>Pecora</taxon>
        <taxon>Bovidae</taxon>
        <taxon>Bovinae</taxon>
        <taxon>Bos</taxon>
    </lineage>
</organism>
<gene>
    <name type="primary">RUVBL2</name>
</gene>
<dbReference type="EC" id="3.6.4.12" evidence="3"/>
<dbReference type="EMBL" id="BC109612">
    <property type="protein sequence ID" value="AAI09613.1"/>
    <property type="molecule type" value="mRNA"/>
</dbReference>
<dbReference type="RefSeq" id="NP_001033615.1">
    <property type="nucleotide sequence ID" value="NM_001038526.2"/>
</dbReference>
<dbReference type="SMR" id="Q2TBU9"/>
<dbReference type="FunCoup" id="Q2TBU9">
    <property type="interactions" value="3657"/>
</dbReference>
<dbReference type="STRING" id="9913.ENSBTAP00000031853"/>
<dbReference type="PaxDb" id="9913-ENSBTAP00000031853"/>
<dbReference type="GeneID" id="511048"/>
<dbReference type="KEGG" id="bta:511048"/>
<dbReference type="CTD" id="10856"/>
<dbReference type="eggNOG" id="KOG2680">
    <property type="taxonomic scope" value="Eukaryota"/>
</dbReference>
<dbReference type="InParanoid" id="Q2TBU9"/>
<dbReference type="OrthoDB" id="10060499at2759"/>
<dbReference type="Proteomes" id="UP000009136">
    <property type="component" value="Unplaced"/>
</dbReference>
<dbReference type="GO" id="GO:0005737">
    <property type="term" value="C:cytoplasm"/>
    <property type="evidence" value="ECO:0000250"/>
    <property type="project" value="UniProtKB"/>
</dbReference>
<dbReference type="GO" id="GO:0120293">
    <property type="term" value="C:dynein axonemal particle"/>
    <property type="evidence" value="ECO:0000250"/>
    <property type="project" value="UniProtKB"/>
</dbReference>
<dbReference type="GO" id="GO:0031011">
    <property type="term" value="C:Ino80 complex"/>
    <property type="evidence" value="ECO:0000318"/>
    <property type="project" value="GO_Central"/>
</dbReference>
<dbReference type="GO" id="GO:0016020">
    <property type="term" value="C:membrane"/>
    <property type="evidence" value="ECO:0007669"/>
    <property type="project" value="UniProtKB-SubCell"/>
</dbReference>
<dbReference type="GO" id="GO:0071339">
    <property type="term" value="C:MLL1 complex"/>
    <property type="evidence" value="ECO:0000250"/>
    <property type="project" value="UniProtKB"/>
</dbReference>
<dbReference type="GO" id="GO:0035267">
    <property type="term" value="C:NuA4 histone acetyltransferase complex"/>
    <property type="evidence" value="ECO:0000250"/>
    <property type="project" value="UniProtKB"/>
</dbReference>
<dbReference type="GO" id="GO:0016363">
    <property type="term" value="C:nuclear matrix"/>
    <property type="evidence" value="ECO:0007669"/>
    <property type="project" value="UniProtKB-SubCell"/>
</dbReference>
<dbReference type="GO" id="GO:0005634">
    <property type="term" value="C:nucleus"/>
    <property type="evidence" value="ECO:0000250"/>
    <property type="project" value="UniProtKB"/>
</dbReference>
<dbReference type="GO" id="GO:0097255">
    <property type="term" value="C:R2TP complex"/>
    <property type="evidence" value="ECO:0000250"/>
    <property type="project" value="UniProtKB"/>
</dbReference>
<dbReference type="GO" id="GO:0000812">
    <property type="term" value="C:Swr1 complex"/>
    <property type="evidence" value="ECO:0000250"/>
    <property type="project" value="UniProtKB"/>
</dbReference>
<dbReference type="GO" id="GO:0005524">
    <property type="term" value="F:ATP binding"/>
    <property type="evidence" value="ECO:0007669"/>
    <property type="project" value="UniProtKB-KW"/>
</dbReference>
<dbReference type="GO" id="GO:0016887">
    <property type="term" value="F:ATP hydrolysis activity"/>
    <property type="evidence" value="ECO:0000250"/>
    <property type="project" value="UniProtKB"/>
</dbReference>
<dbReference type="GO" id="GO:0003678">
    <property type="term" value="F:DNA helicase activity"/>
    <property type="evidence" value="ECO:0000318"/>
    <property type="project" value="GO_Central"/>
</dbReference>
<dbReference type="GO" id="GO:0000492">
    <property type="term" value="P:box C/D snoRNP assembly"/>
    <property type="evidence" value="ECO:0000318"/>
    <property type="project" value="GO_Central"/>
</dbReference>
<dbReference type="GO" id="GO:0006338">
    <property type="term" value="P:chromatin remodeling"/>
    <property type="evidence" value="ECO:0000318"/>
    <property type="project" value="GO_Central"/>
</dbReference>
<dbReference type="GO" id="GO:0006310">
    <property type="term" value="P:DNA recombination"/>
    <property type="evidence" value="ECO:0007669"/>
    <property type="project" value="UniProtKB-KW"/>
</dbReference>
<dbReference type="GO" id="GO:0006281">
    <property type="term" value="P:DNA repair"/>
    <property type="evidence" value="ECO:0007669"/>
    <property type="project" value="UniProtKB-KW"/>
</dbReference>
<dbReference type="GO" id="GO:0006357">
    <property type="term" value="P:regulation of transcription by RNA polymerase II"/>
    <property type="evidence" value="ECO:0000318"/>
    <property type="project" value="GO_Central"/>
</dbReference>
<dbReference type="FunFam" id="3.40.50.300:FF:002221">
    <property type="entry name" value="RuvB-like 2"/>
    <property type="match status" value="2"/>
</dbReference>
<dbReference type="FunFam" id="1.10.8.60:FF:000010">
    <property type="entry name" value="RuvB-like helicase"/>
    <property type="match status" value="1"/>
</dbReference>
<dbReference type="FunFam" id="2.40.50.360:FF:000002">
    <property type="entry name" value="RuvB-like helicase"/>
    <property type="match status" value="1"/>
</dbReference>
<dbReference type="Gene3D" id="1.10.8.60">
    <property type="match status" value="1"/>
</dbReference>
<dbReference type="Gene3D" id="3.40.50.300">
    <property type="entry name" value="P-loop containing nucleotide triphosphate hydrolases"/>
    <property type="match status" value="1"/>
</dbReference>
<dbReference type="Gene3D" id="2.40.50.360">
    <property type="entry name" value="RuvB-like helicase, domain II"/>
    <property type="match status" value="1"/>
</dbReference>
<dbReference type="InterPro" id="IPR003593">
    <property type="entry name" value="AAA+_ATPase"/>
</dbReference>
<dbReference type="InterPro" id="IPR027417">
    <property type="entry name" value="P-loop_NTPase"/>
</dbReference>
<dbReference type="InterPro" id="IPR027238">
    <property type="entry name" value="RuvB-like"/>
</dbReference>
<dbReference type="InterPro" id="IPR041048">
    <property type="entry name" value="RuvB-like_C"/>
</dbReference>
<dbReference type="InterPro" id="IPR042487">
    <property type="entry name" value="RuvBL1/2_DNA/RNA_bd_dom"/>
</dbReference>
<dbReference type="InterPro" id="IPR010339">
    <property type="entry name" value="TIP49_P-loop"/>
</dbReference>
<dbReference type="PANTHER" id="PTHR11093">
    <property type="entry name" value="RUVB-RELATED REPTIN AND PONTIN"/>
    <property type="match status" value="1"/>
</dbReference>
<dbReference type="Pfam" id="PF06068">
    <property type="entry name" value="TIP49"/>
    <property type="match status" value="1"/>
</dbReference>
<dbReference type="Pfam" id="PF17856">
    <property type="entry name" value="TIP49_C"/>
    <property type="match status" value="1"/>
</dbReference>
<dbReference type="PRINTS" id="PR01874">
    <property type="entry name" value="DNAREPAIRADA"/>
</dbReference>
<dbReference type="SMART" id="SM00382">
    <property type="entry name" value="AAA"/>
    <property type="match status" value="1"/>
</dbReference>
<dbReference type="SUPFAM" id="SSF52540">
    <property type="entry name" value="P-loop containing nucleoside triphosphate hydrolases"/>
    <property type="match status" value="1"/>
</dbReference>
<proteinExistence type="evidence at transcript level"/>
<name>RUVB2_BOVIN</name>
<accession>Q2TBU9</accession>
<feature type="initiator methionine" description="Removed" evidence="3">
    <location>
        <position position="1"/>
    </location>
</feature>
<feature type="chain" id="PRO_0000253730" description="RuvB-like 2">
    <location>
        <begin position="2"/>
        <end position="463"/>
    </location>
</feature>
<feature type="binding site" evidence="1">
    <location>
        <begin position="77"/>
        <end position="84"/>
    </location>
    <ligand>
        <name>ATP</name>
        <dbReference type="ChEBI" id="CHEBI:30616"/>
    </ligand>
</feature>
<feature type="modified residue" description="N-acetylalanine" evidence="3">
    <location>
        <position position="2"/>
    </location>
</feature>
<feature type="modified residue" description="Phosphoserine" evidence="3">
    <location>
        <position position="437"/>
    </location>
</feature>
<feature type="cross-link" description="Glycyl lysine isopeptide (Lys-Gly) (interchain with G-Cter in SUMO2)" evidence="3">
    <location>
        <position position="9"/>
    </location>
</feature>
<feature type="cross-link" description="Glycyl lysine isopeptide (Lys-Gly) (interchain with G-Cter in SUMO2)" evidence="3">
    <location>
        <position position="444"/>
    </location>
</feature>
<feature type="cross-link" description="Glycyl lysine isopeptide (Lys-Gly) (interchain with G-Cter in SUMO2)" evidence="3">
    <location>
        <position position="456"/>
    </location>
</feature>
<reference key="1">
    <citation type="submission" date="2005-11" db="EMBL/GenBank/DDBJ databases">
        <authorList>
            <consortium name="NIH - Mammalian Gene Collection (MGC) project"/>
        </authorList>
    </citation>
    <scope>NUCLEOTIDE SEQUENCE [LARGE SCALE MRNA]</scope>
    <source>
        <strain>Crossbred X Angus</strain>
        <tissue>Liver</tissue>
    </source>
</reference>
<sequence>MATVTATTKVPEIRDVTRIERIGAHSHIRGLGLDDALEPRQASQGMVGQLAARRAAGVVLEMIREGKIAGRAVLIAGQPGTGKTAIAMGMAQALGPDTPFTAIAGSEIFSLEMSKTEALTQAFRRSIGVRIKEETEIIEGEVVEIQIDRPATGTGSKVGKLTLKTTEMETIYDLGTKMIESLTKDKVQAGDVITIDKATGKISKLGRSFTRARDYDAMGSQTKFVQCPDGELQKRKEVVHTVSLHEIDVINSRTQGFLALFSGDTGEIKSEVREQINAKVAEWREEGKAEIIPGVLFIDEVHMLDIESFSFLNRALESDMAPVLIMATNRGITRIRGTSYQSPHGIPIDLLDRLLIVSTSPYSEKDKKQILRIRCEEEDVEMSEDAYTVLTRIGLETSLRYAIQLITAASLVCRKRKGTEVQVDDIKRVYSLFLDESRSTQYMKEYQDAFLFNELKGETMDTS</sequence>
<keyword id="KW-0007">Acetylation</keyword>
<keyword id="KW-0010">Activator</keyword>
<keyword id="KW-0067">ATP-binding</keyword>
<keyword id="KW-0156">Chromatin regulator</keyword>
<keyword id="KW-0963">Cytoplasm</keyword>
<keyword id="KW-0227">DNA damage</keyword>
<keyword id="KW-0233">DNA recombination</keyword>
<keyword id="KW-0234">DNA repair</keyword>
<keyword id="KW-0347">Helicase</keyword>
<keyword id="KW-0378">Hydrolase</keyword>
<keyword id="KW-1017">Isopeptide bond</keyword>
<keyword id="KW-0472">Membrane</keyword>
<keyword id="KW-0547">Nucleotide-binding</keyword>
<keyword id="KW-0539">Nucleus</keyword>
<keyword id="KW-0597">Phosphoprotein</keyword>
<keyword id="KW-1185">Reference proteome</keyword>
<keyword id="KW-0804">Transcription</keyword>
<keyword id="KW-0805">Transcription regulation</keyword>
<keyword id="KW-0832">Ubl conjugation</keyword>